<gene>
    <name type="ordered locus">VP2621</name>
</gene>
<organism>
    <name type="scientific">Vibrio parahaemolyticus serotype O3:K6 (strain RIMD 2210633)</name>
    <dbReference type="NCBI Taxonomy" id="223926"/>
    <lineage>
        <taxon>Bacteria</taxon>
        <taxon>Pseudomonadati</taxon>
        <taxon>Pseudomonadota</taxon>
        <taxon>Gammaproteobacteria</taxon>
        <taxon>Vibrionales</taxon>
        <taxon>Vibrionaceae</taxon>
        <taxon>Vibrio</taxon>
    </lineage>
</organism>
<feature type="chain" id="PRO_0000178261" description="dITP/XTP pyrophosphatase">
    <location>
        <begin position="1"/>
        <end position="200"/>
    </location>
</feature>
<feature type="active site" description="Proton acceptor" evidence="1">
    <location>
        <position position="69"/>
    </location>
</feature>
<feature type="binding site" evidence="1">
    <location>
        <begin position="8"/>
        <end position="13"/>
    </location>
    <ligand>
        <name>substrate</name>
    </ligand>
</feature>
<feature type="binding site" evidence="1">
    <location>
        <position position="69"/>
    </location>
    <ligand>
        <name>Mg(2+)</name>
        <dbReference type="ChEBI" id="CHEBI:18420"/>
    </ligand>
</feature>
<feature type="binding site" evidence="1">
    <location>
        <position position="70"/>
    </location>
    <ligand>
        <name>substrate</name>
    </ligand>
</feature>
<feature type="binding site" evidence="1">
    <location>
        <begin position="154"/>
        <end position="157"/>
    </location>
    <ligand>
        <name>substrate</name>
    </ligand>
</feature>
<feature type="binding site" evidence="1">
    <location>
        <position position="177"/>
    </location>
    <ligand>
        <name>substrate</name>
    </ligand>
</feature>
<feature type="binding site" evidence="1">
    <location>
        <begin position="182"/>
        <end position="183"/>
    </location>
    <ligand>
        <name>substrate</name>
    </ligand>
</feature>
<sequence length="200" mass="21802">MKKIVLATGNQGKVREMADLLSDFGFEVLAQSEFNVSEVAETGTTFIENAIIKARHAAQETGLPAIADDSGLEVDFLKGAPGIYSARYAGEKASDQENLEKLLAAMEGVPEAERTARFHCVLVLMRHENDPTPIVCHGKWEGRILTEAHGENGFGYDPIFFVPEDNCASAELEPARKKQLSHRGKALKSLFAQLSAQTAQ</sequence>
<name>IXTPA_VIBPA</name>
<evidence type="ECO:0000255" key="1">
    <source>
        <dbReference type="HAMAP-Rule" id="MF_01405"/>
    </source>
</evidence>
<dbReference type="EC" id="3.6.1.66" evidence="1"/>
<dbReference type="EMBL" id="BA000031">
    <property type="protein sequence ID" value="BAC60884.1"/>
    <property type="molecule type" value="Genomic_DNA"/>
</dbReference>
<dbReference type="RefSeq" id="NP_799000.1">
    <property type="nucleotide sequence ID" value="NC_004603.1"/>
</dbReference>
<dbReference type="RefSeq" id="WP_005482459.1">
    <property type="nucleotide sequence ID" value="NC_004603.1"/>
</dbReference>
<dbReference type="SMR" id="Q87LJ1"/>
<dbReference type="GeneID" id="1190145"/>
<dbReference type="KEGG" id="vpa:VP2621"/>
<dbReference type="PATRIC" id="fig|223926.6.peg.2517"/>
<dbReference type="eggNOG" id="COG0127">
    <property type="taxonomic scope" value="Bacteria"/>
</dbReference>
<dbReference type="HOGENOM" id="CLU_082080_0_3_6"/>
<dbReference type="Proteomes" id="UP000002493">
    <property type="component" value="Chromosome 1"/>
</dbReference>
<dbReference type="GO" id="GO:0005829">
    <property type="term" value="C:cytosol"/>
    <property type="evidence" value="ECO:0007669"/>
    <property type="project" value="TreeGrafter"/>
</dbReference>
<dbReference type="GO" id="GO:0035870">
    <property type="term" value="F:dITP diphosphatase activity"/>
    <property type="evidence" value="ECO:0007669"/>
    <property type="project" value="RHEA"/>
</dbReference>
<dbReference type="GO" id="GO:0036220">
    <property type="term" value="F:ITP diphosphatase activity"/>
    <property type="evidence" value="ECO:0007669"/>
    <property type="project" value="UniProtKB-EC"/>
</dbReference>
<dbReference type="GO" id="GO:0046872">
    <property type="term" value="F:metal ion binding"/>
    <property type="evidence" value="ECO:0007669"/>
    <property type="project" value="UniProtKB-KW"/>
</dbReference>
<dbReference type="GO" id="GO:0000166">
    <property type="term" value="F:nucleotide binding"/>
    <property type="evidence" value="ECO:0007669"/>
    <property type="project" value="UniProtKB-KW"/>
</dbReference>
<dbReference type="GO" id="GO:0017111">
    <property type="term" value="F:ribonucleoside triphosphate phosphatase activity"/>
    <property type="evidence" value="ECO:0007669"/>
    <property type="project" value="InterPro"/>
</dbReference>
<dbReference type="GO" id="GO:0036222">
    <property type="term" value="F:XTP diphosphatase activity"/>
    <property type="evidence" value="ECO:0007669"/>
    <property type="project" value="RHEA"/>
</dbReference>
<dbReference type="GO" id="GO:0009117">
    <property type="term" value="P:nucleotide metabolic process"/>
    <property type="evidence" value="ECO:0007669"/>
    <property type="project" value="UniProtKB-KW"/>
</dbReference>
<dbReference type="GO" id="GO:0009146">
    <property type="term" value="P:purine nucleoside triphosphate catabolic process"/>
    <property type="evidence" value="ECO:0007669"/>
    <property type="project" value="UniProtKB-UniRule"/>
</dbReference>
<dbReference type="CDD" id="cd00515">
    <property type="entry name" value="HAM1"/>
    <property type="match status" value="1"/>
</dbReference>
<dbReference type="FunFam" id="3.90.950.10:FF:000001">
    <property type="entry name" value="dITP/XTP pyrophosphatase"/>
    <property type="match status" value="1"/>
</dbReference>
<dbReference type="Gene3D" id="3.90.950.10">
    <property type="match status" value="1"/>
</dbReference>
<dbReference type="HAMAP" id="MF_01405">
    <property type="entry name" value="Non_canon_purine_NTPase"/>
    <property type="match status" value="1"/>
</dbReference>
<dbReference type="InterPro" id="IPR020922">
    <property type="entry name" value="dITP/XTP_pyrophosphatase"/>
</dbReference>
<dbReference type="InterPro" id="IPR029001">
    <property type="entry name" value="ITPase-like_fam"/>
</dbReference>
<dbReference type="InterPro" id="IPR002637">
    <property type="entry name" value="RdgB/HAM1"/>
</dbReference>
<dbReference type="NCBIfam" id="NF011397">
    <property type="entry name" value="PRK14822.1"/>
    <property type="match status" value="1"/>
</dbReference>
<dbReference type="NCBIfam" id="TIGR00042">
    <property type="entry name" value="RdgB/HAM1 family non-canonical purine NTP pyrophosphatase"/>
    <property type="match status" value="1"/>
</dbReference>
<dbReference type="PANTHER" id="PTHR11067:SF9">
    <property type="entry name" value="INOSINE TRIPHOSPHATE PYROPHOSPHATASE"/>
    <property type="match status" value="1"/>
</dbReference>
<dbReference type="PANTHER" id="PTHR11067">
    <property type="entry name" value="INOSINE TRIPHOSPHATE PYROPHOSPHATASE/HAM1 PROTEIN"/>
    <property type="match status" value="1"/>
</dbReference>
<dbReference type="Pfam" id="PF01725">
    <property type="entry name" value="Ham1p_like"/>
    <property type="match status" value="1"/>
</dbReference>
<dbReference type="SUPFAM" id="SSF52972">
    <property type="entry name" value="ITPase-like"/>
    <property type="match status" value="1"/>
</dbReference>
<reference key="1">
    <citation type="journal article" date="2003" name="Lancet">
        <title>Genome sequence of Vibrio parahaemolyticus: a pathogenic mechanism distinct from that of V. cholerae.</title>
        <authorList>
            <person name="Makino K."/>
            <person name="Oshima K."/>
            <person name="Kurokawa K."/>
            <person name="Yokoyama K."/>
            <person name="Uda T."/>
            <person name="Tagomori K."/>
            <person name="Iijima Y."/>
            <person name="Najima M."/>
            <person name="Nakano M."/>
            <person name="Yamashita A."/>
            <person name="Kubota Y."/>
            <person name="Kimura S."/>
            <person name="Yasunaga T."/>
            <person name="Honda T."/>
            <person name="Shinagawa H."/>
            <person name="Hattori M."/>
            <person name="Iida T."/>
        </authorList>
    </citation>
    <scope>NUCLEOTIDE SEQUENCE [LARGE SCALE GENOMIC DNA]</scope>
    <source>
        <strain>RIMD 2210633</strain>
    </source>
</reference>
<keyword id="KW-0378">Hydrolase</keyword>
<keyword id="KW-0460">Magnesium</keyword>
<keyword id="KW-0479">Metal-binding</keyword>
<keyword id="KW-0546">Nucleotide metabolism</keyword>
<keyword id="KW-0547">Nucleotide-binding</keyword>
<proteinExistence type="inferred from homology"/>
<comment type="function">
    <text evidence="1">Pyrophosphatase that catalyzes the hydrolysis of nucleoside triphosphates to their monophosphate derivatives, with a high preference for the non-canonical purine nucleotides XTP (xanthosine triphosphate), dITP (deoxyinosine triphosphate) and ITP. Seems to function as a house-cleaning enzyme that removes non-canonical purine nucleotides from the nucleotide pool, thus preventing their incorporation into DNA/RNA and avoiding chromosomal lesions.</text>
</comment>
<comment type="catalytic activity">
    <reaction evidence="1">
        <text>XTP + H2O = XMP + diphosphate + H(+)</text>
        <dbReference type="Rhea" id="RHEA:28610"/>
        <dbReference type="ChEBI" id="CHEBI:15377"/>
        <dbReference type="ChEBI" id="CHEBI:15378"/>
        <dbReference type="ChEBI" id="CHEBI:33019"/>
        <dbReference type="ChEBI" id="CHEBI:57464"/>
        <dbReference type="ChEBI" id="CHEBI:61314"/>
        <dbReference type="EC" id="3.6.1.66"/>
    </reaction>
</comment>
<comment type="catalytic activity">
    <reaction evidence="1">
        <text>dITP + H2O = dIMP + diphosphate + H(+)</text>
        <dbReference type="Rhea" id="RHEA:28342"/>
        <dbReference type="ChEBI" id="CHEBI:15377"/>
        <dbReference type="ChEBI" id="CHEBI:15378"/>
        <dbReference type="ChEBI" id="CHEBI:33019"/>
        <dbReference type="ChEBI" id="CHEBI:61194"/>
        <dbReference type="ChEBI" id="CHEBI:61382"/>
        <dbReference type="EC" id="3.6.1.66"/>
    </reaction>
</comment>
<comment type="catalytic activity">
    <reaction evidence="1">
        <text>ITP + H2O = IMP + diphosphate + H(+)</text>
        <dbReference type="Rhea" id="RHEA:29399"/>
        <dbReference type="ChEBI" id="CHEBI:15377"/>
        <dbReference type="ChEBI" id="CHEBI:15378"/>
        <dbReference type="ChEBI" id="CHEBI:33019"/>
        <dbReference type="ChEBI" id="CHEBI:58053"/>
        <dbReference type="ChEBI" id="CHEBI:61402"/>
        <dbReference type="EC" id="3.6.1.66"/>
    </reaction>
</comment>
<comment type="cofactor">
    <cofactor evidence="1">
        <name>Mg(2+)</name>
        <dbReference type="ChEBI" id="CHEBI:18420"/>
    </cofactor>
    <text evidence="1">Binds 1 Mg(2+) ion per subunit.</text>
</comment>
<comment type="subunit">
    <text evidence="1">Homodimer.</text>
</comment>
<comment type="similarity">
    <text evidence="1">Belongs to the HAM1 NTPase family.</text>
</comment>
<accession>Q87LJ1</accession>
<protein>
    <recommendedName>
        <fullName evidence="1">dITP/XTP pyrophosphatase</fullName>
        <ecNumber evidence="1">3.6.1.66</ecNumber>
    </recommendedName>
    <alternativeName>
        <fullName evidence="1">Non-canonical purine NTP pyrophosphatase</fullName>
    </alternativeName>
    <alternativeName>
        <fullName evidence="1">Non-standard purine NTP pyrophosphatase</fullName>
    </alternativeName>
    <alternativeName>
        <fullName evidence="1">Nucleoside-triphosphate diphosphatase</fullName>
    </alternativeName>
    <alternativeName>
        <fullName evidence="1">Nucleoside-triphosphate pyrophosphatase</fullName>
        <shortName evidence="1">NTPase</shortName>
    </alternativeName>
</protein>